<dbReference type="EC" id="3.6.1.1" evidence="2"/>
<dbReference type="EMBL" id="AB003087">
    <property type="protein sequence ID" value="BAA19837.1"/>
    <property type="molecule type" value="Genomic_DNA"/>
</dbReference>
<dbReference type="PIR" id="JH0271">
    <property type="entry name" value="JH0271"/>
</dbReference>
<dbReference type="SMR" id="O05724"/>
<dbReference type="GO" id="GO:0005737">
    <property type="term" value="C:cytoplasm"/>
    <property type="evidence" value="ECO:0007669"/>
    <property type="project" value="UniProtKB-SubCell"/>
</dbReference>
<dbReference type="GO" id="GO:0004427">
    <property type="term" value="F:inorganic diphosphate phosphatase activity"/>
    <property type="evidence" value="ECO:0007669"/>
    <property type="project" value="UniProtKB-UniRule"/>
</dbReference>
<dbReference type="GO" id="GO:0000287">
    <property type="term" value="F:magnesium ion binding"/>
    <property type="evidence" value="ECO:0007669"/>
    <property type="project" value="UniProtKB-UniRule"/>
</dbReference>
<dbReference type="GO" id="GO:0006796">
    <property type="term" value="P:phosphate-containing compound metabolic process"/>
    <property type="evidence" value="ECO:0007669"/>
    <property type="project" value="InterPro"/>
</dbReference>
<dbReference type="CDD" id="cd00412">
    <property type="entry name" value="pyrophosphatase"/>
    <property type="match status" value="1"/>
</dbReference>
<dbReference type="FunFam" id="3.90.80.10:FF:000003">
    <property type="entry name" value="Inorganic pyrophosphatase"/>
    <property type="match status" value="1"/>
</dbReference>
<dbReference type="Gene3D" id="3.90.80.10">
    <property type="entry name" value="Inorganic pyrophosphatase"/>
    <property type="match status" value="1"/>
</dbReference>
<dbReference type="HAMAP" id="MF_00209">
    <property type="entry name" value="Inorganic_PPase"/>
    <property type="match status" value="1"/>
</dbReference>
<dbReference type="InterPro" id="IPR008162">
    <property type="entry name" value="Pyrophosphatase"/>
</dbReference>
<dbReference type="InterPro" id="IPR036649">
    <property type="entry name" value="Pyrophosphatase_sf"/>
</dbReference>
<dbReference type="PANTHER" id="PTHR10286">
    <property type="entry name" value="INORGANIC PYROPHOSPHATASE"/>
    <property type="match status" value="1"/>
</dbReference>
<dbReference type="Pfam" id="PF00719">
    <property type="entry name" value="Pyrophosphatase"/>
    <property type="match status" value="1"/>
</dbReference>
<dbReference type="SUPFAM" id="SSF50324">
    <property type="entry name" value="Inorganic pyrophosphatase"/>
    <property type="match status" value="1"/>
</dbReference>
<dbReference type="PROSITE" id="PS00387">
    <property type="entry name" value="PPASE"/>
    <property type="match status" value="1"/>
</dbReference>
<evidence type="ECO:0000250" key="1"/>
<evidence type="ECO:0000255" key="2">
    <source>
        <dbReference type="HAMAP-Rule" id="MF_00209"/>
    </source>
</evidence>
<evidence type="ECO:0000269" key="3">
    <source>
    </source>
</evidence>
<accession>O05724</accession>
<gene>
    <name evidence="2" type="primary">ppa</name>
    <name type="synonym">pMK2PPA</name>
</gene>
<feature type="initiator methionine" description="Removed" evidence="1">
    <location>
        <position position="1"/>
    </location>
</feature>
<feature type="chain" id="PRO_0000137479" description="Inorganic pyrophosphatase">
    <location>
        <begin position="2"/>
        <end position="165"/>
    </location>
</feature>
<feature type="binding site" evidence="2">
    <location>
        <position position="21"/>
    </location>
    <ligand>
        <name>substrate</name>
    </ligand>
</feature>
<feature type="binding site" evidence="2">
    <location>
        <position position="35"/>
    </location>
    <ligand>
        <name>substrate</name>
    </ligand>
</feature>
<feature type="binding site" evidence="2">
    <location>
        <position position="47"/>
    </location>
    <ligand>
        <name>substrate</name>
    </ligand>
</feature>
<feature type="binding site" evidence="2">
    <location>
        <position position="57"/>
    </location>
    <ligand>
        <name>Mg(2+)</name>
        <dbReference type="ChEBI" id="CHEBI:18420"/>
        <label>1</label>
    </ligand>
</feature>
<feature type="binding site" evidence="2">
    <location>
        <position position="62"/>
    </location>
    <ligand>
        <name>Mg(2+)</name>
        <dbReference type="ChEBI" id="CHEBI:18420"/>
        <label>1</label>
    </ligand>
</feature>
<feature type="binding site" evidence="2">
    <location>
        <position position="62"/>
    </location>
    <ligand>
        <name>Mg(2+)</name>
        <dbReference type="ChEBI" id="CHEBI:18420"/>
        <label>2</label>
    </ligand>
</feature>
<feature type="binding site" evidence="2">
    <location>
        <position position="94"/>
    </location>
    <ligand>
        <name>Mg(2+)</name>
        <dbReference type="ChEBI" id="CHEBI:18420"/>
        <label>1</label>
    </ligand>
</feature>
<feature type="binding site" evidence="2">
    <location>
        <position position="131"/>
    </location>
    <ligand>
        <name>substrate</name>
    </ligand>
</feature>
<feature type="mutagenesis site" description="Loss of activity." evidence="3">
    <original>Y</original>
    <variation>F</variation>
    <location>
        <position position="47"/>
    </location>
</feature>
<feature type="mutagenesis site" description="Loss of activity." evidence="3">
    <original>Y</original>
    <variation>F</variation>
    <location>
        <position position="131"/>
    </location>
</feature>
<comment type="function">
    <text evidence="2">Catalyzes the hydrolysis of inorganic pyrophosphate (PPi) forming two phosphate ions.</text>
</comment>
<comment type="catalytic activity">
    <reaction evidence="2">
        <text>diphosphate + H2O = 2 phosphate + H(+)</text>
        <dbReference type="Rhea" id="RHEA:24576"/>
        <dbReference type="ChEBI" id="CHEBI:15377"/>
        <dbReference type="ChEBI" id="CHEBI:15378"/>
        <dbReference type="ChEBI" id="CHEBI:33019"/>
        <dbReference type="ChEBI" id="CHEBI:43474"/>
        <dbReference type="EC" id="3.6.1.1"/>
    </reaction>
</comment>
<comment type="cofactor">
    <cofactor evidence="2">
        <name>Mg(2+)</name>
        <dbReference type="ChEBI" id="CHEBI:18420"/>
    </cofactor>
</comment>
<comment type="subunit">
    <text evidence="2">Homohexamer.</text>
</comment>
<comment type="subcellular location">
    <subcellularLocation>
        <location evidence="2">Cytoplasm</location>
    </subcellularLocation>
</comment>
<comment type="similarity">
    <text evidence="2">Belongs to the PPase family.</text>
</comment>
<protein>
    <recommendedName>
        <fullName evidence="2">Inorganic pyrophosphatase</fullName>
        <ecNumber evidence="2">3.6.1.1</ecNumber>
    </recommendedName>
    <alternativeName>
        <fullName evidence="2">Pyrophosphate phospho-hydrolase</fullName>
        <shortName evidence="2">PPase</shortName>
    </alternativeName>
</protein>
<proteinExistence type="evidence at protein level"/>
<organism>
    <name type="scientific">Geobacillus stearothermophilus</name>
    <name type="common">Bacillus stearothermophilus</name>
    <dbReference type="NCBI Taxonomy" id="1422"/>
    <lineage>
        <taxon>Bacteria</taxon>
        <taxon>Bacillati</taxon>
        <taxon>Bacillota</taxon>
        <taxon>Bacilli</taxon>
        <taxon>Bacillales</taxon>
        <taxon>Anoxybacillaceae</taxon>
        <taxon>Geobacillus</taxon>
    </lineage>
</organism>
<sequence length="165" mass="18927">MAFENKIVEAFIEIPTGSQNKYEFDKERGIFKLDRVLYSPMFYPAEYGYLQNTLALDGDPLDILVITTNPTFPGCVIDTRVIGYLNMVDSGEEDAKLIGVPVEDPRFDEVRSIEDLPQHKLKEIAHFFERYKDLQGKRTEIGTWEGPEAAAKLIDECIARYNEQK</sequence>
<name>IPYR_GEOSE</name>
<reference key="1">
    <citation type="journal article" date="1999" name="J. Biochem.">
        <title>Primary structure, expression, and site-directed mutagenesis of inorganic pyrophosphatase from Bacillus stearothermophilus.</title>
        <authorList>
            <person name="Satoh T."/>
            <person name="Shinoda H."/>
            <person name="Ishii K."/>
            <person name="Koyama M."/>
            <person name="Sakurai N."/>
            <person name="Kaji H."/>
            <person name="Hachimori A."/>
            <person name="Irie M."/>
            <person name="Samejima T."/>
        </authorList>
    </citation>
    <scope>NUCLEOTIDE SEQUENCE [GENOMIC DNA]</scope>
    <scope>MUTAGENESIS OF TYR-47 AND TYR-131</scope>
    <source>
        <strain>ATCC 12016</strain>
    </source>
</reference>
<keyword id="KW-0963">Cytoplasm</keyword>
<keyword id="KW-0378">Hydrolase</keyword>
<keyword id="KW-0460">Magnesium</keyword>
<keyword id="KW-0479">Metal-binding</keyword>